<name>DER_PROMT</name>
<comment type="function">
    <text evidence="1">GTPase that plays an essential role in the late steps of ribosome biogenesis.</text>
</comment>
<comment type="subunit">
    <text evidence="1">Associates with the 50S ribosomal subunit.</text>
</comment>
<comment type="similarity">
    <text evidence="1">Belongs to the TRAFAC class TrmE-Era-EngA-EngB-Septin-like GTPase superfamily. EngA (Der) GTPase family.</text>
</comment>
<proteinExistence type="inferred from homology"/>
<sequence>MALPVVAIIGRPNVGKSTLVNRLCQSREAIVHDEPGVTRDRTYQDGFWRDRDFKVVDTGGLVFDDDSEFLPEIREQANLALEEAVVALVIVDGQEGITTADESIAEFLRSRSGKTLVVVNKCESPEQGLAMAAQFWKLGLGEPYPISAIHGVGTGDLLDQVVNLFPSKDLDEVSDSPVQLAIIGRPNVGKSSLLNSICGETRAIVSSIRGTTRDTIDTRITHQGKEWKLVDTAGIRRRRSVNYGPEFFGINRSFKAIERSDVCVLVIDALDGVTEQDQRLAGRIEQEGRACLIVINKWDAVEKDSHTMSAMEKDIRSKLYFLDWAQMIFTSAVTGQRVEGIFALATLAVDQSRRRVTTSVVNEVLTEALKWRSPPTTRGGKQGRLYYGTQVAINPPSFTLFVNEPKLFGETYRRYIERQIREGLGFEGTPIKLFWRGKQQRDVEKDMARQQKGVRN</sequence>
<gene>
    <name evidence="1" type="primary">der</name>
    <name type="synonym">engA</name>
    <name type="ordered locus">PMN2A_1726</name>
</gene>
<feature type="chain" id="PRO_1000011695" description="GTPase Der">
    <location>
        <begin position="1"/>
        <end position="456"/>
    </location>
</feature>
<feature type="domain" description="EngA-type G 1">
    <location>
        <begin position="4"/>
        <end position="169"/>
    </location>
</feature>
<feature type="domain" description="EngA-type G 2">
    <location>
        <begin position="178"/>
        <end position="353"/>
    </location>
</feature>
<feature type="domain" description="KH-like" evidence="1">
    <location>
        <begin position="354"/>
        <end position="439"/>
    </location>
</feature>
<feature type="binding site" evidence="1">
    <location>
        <begin position="10"/>
        <end position="17"/>
    </location>
    <ligand>
        <name>GTP</name>
        <dbReference type="ChEBI" id="CHEBI:37565"/>
        <label>1</label>
    </ligand>
</feature>
<feature type="binding site" evidence="1">
    <location>
        <begin position="57"/>
        <end position="61"/>
    </location>
    <ligand>
        <name>GTP</name>
        <dbReference type="ChEBI" id="CHEBI:37565"/>
        <label>1</label>
    </ligand>
</feature>
<feature type="binding site" evidence="1">
    <location>
        <begin position="120"/>
        <end position="123"/>
    </location>
    <ligand>
        <name>GTP</name>
        <dbReference type="ChEBI" id="CHEBI:37565"/>
        <label>1</label>
    </ligand>
</feature>
<feature type="binding site" evidence="1">
    <location>
        <begin position="184"/>
        <end position="191"/>
    </location>
    <ligand>
        <name>GTP</name>
        <dbReference type="ChEBI" id="CHEBI:37565"/>
        <label>2</label>
    </ligand>
</feature>
<feature type="binding site" evidence="1">
    <location>
        <begin position="231"/>
        <end position="235"/>
    </location>
    <ligand>
        <name>GTP</name>
        <dbReference type="ChEBI" id="CHEBI:37565"/>
        <label>2</label>
    </ligand>
</feature>
<feature type="binding site" evidence="1">
    <location>
        <begin position="296"/>
        <end position="299"/>
    </location>
    <ligand>
        <name>GTP</name>
        <dbReference type="ChEBI" id="CHEBI:37565"/>
        <label>2</label>
    </ligand>
</feature>
<organism>
    <name type="scientific">Prochlorococcus marinus (strain NATL2A)</name>
    <dbReference type="NCBI Taxonomy" id="59920"/>
    <lineage>
        <taxon>Bacteria</taxon>
        <taxon>Bacillati</taxon>
        <taxon>Cyanobacteriota</taxon>
        <taxon>Cyanophyceae</taxon>
        <taxon>Synechococcales</taxon>
        <taxon>Prochlorococcaceae</taxon>
        <taxon>Prochlorococcus</taxon>
    </lineage>
</organism>
<reference key="1">
    <citation type="journal article" date="2007" name="PLoS Genet.">
        <title>Patterns and implications of gene gain and loss in the evolution of Prochlorococcus.</title>
        <authorList>
            <person name="Kettler G.C."/>
            <person name="Martiny A.C."/>
            <person name="Huang K."/>
            <person name="Zucker J."/>
            <person name="Coleman M.L."/>
            <person name="Rodrigue S."/>
            <person name="Chen F."/>
            <person name="Lapidus A."/>
            <person name="Ferriera S."/>
            <person name="Johnson J."/>
            <person name="Steglich C."/>
            <person name="Church G.M."/>
            <person name="Richardson P."/>
            <person name="Chisholm S.W."/>
        </authorList>
    </citation>
    <scope>NUCLEOTIDE SEQUENCE [LARGE SCALE GENOMIC DNA]</scope>
    <source>
        <strain>NATL2A</strain>
    </source>
</reference>
<protein>
    <recommendedName>
        <fullName evidence="1">GTPase Der</fullName>
    </recommendedName>
    <alternativeName>
        <fullName evidence="1">GTP-binding protein EngA</fullName>
    </alternativeName>
</protein>
<dbReference type="EMBL" id="CP000095">
    <property type="protein sequence ID" value="AAZ59214.1"/>
    <property type="molecule type" value="Genomic_DNA"/>
</dbReference>
<dbReference type="RefSeq" id="WP_011294359.1">
    <property type="nucleotide sequence ID" value="NC_007335.2"/>
</dbReference>
<dbReference type="SMR" id="Q46H20"/>
<dbReference type="STRING" id="59920.PMN2A_1726"/>
<dbReference type="KEGG" id="pmn:PMN2A_1726"/>
<dbReference type="HOGENOM" id="CLU_016077_6_2_3"/>
<dbReference type="OrthoDB" id="9805918at2"/>
<dbReference type="PhylomeDB" id="Q46H20"/>
<dbReference type="Proteomes" id="UP000002535">
    <property type="component" value="Chromosome"/>
</dbReference>
<dbReference type="GO" id="GO:0016887">
    <property type="term" value="F:ATP hydrolysis activity"/>
    <property type="evidence" value="ECO:0007669"/>
    <property type="project" value="InterPro"/>
</dbReference>
<dbReference type="GO" id="GO:0005525">
    <property type="term" value="F:GTP binding"/>
    <property type="evidence" value="ECO:0007669"/>
    <property type="project" value="UniProtKB-UniRule"/>
</dbReference>
<dbReference type="GO" id="GO:0043022">
    <property type="term" value="F:ribosome binding"/>
    <property type="evidence" value="ECO:0007669"/>
    <property type="project" value="TreeGrafter"/>
</dbReference>
<dbReference type="GO" id="GO:0042254">
    <property type="term" value="P:ribosome biogenesis"/>
    <property type="evidence" value="ECO:0007669"/>
    <property type="project" value="UniProtKB-KW"/>
</dbReference>
<dbReference type="CDD" id="cd01894">
    <property type="entry name" value="EngA1"/>
    <property type="match status" value="1"/>
</dbReference>
<dbReference type="CDD" id="cd01895">
    <property type="entry name" value="EngA2"/>
    <property type="match status" value="1"/>
</dbReference>
<dbReference type="FunFam" id="3.30.300.20:FF:000004">
    <property type="entry name" value="GTPase Der"/>
    <property type="match status" value="1"/>
</dbReference>
<dbReference type="FunFam" id="3.40.50.300:FF:000040">
    <property type="entry name" value="GTPase Der"/>
    <property type="match status" value="1"/>
</dbReference>
<dbReference type="FunFam" id="3.40.50.300:FF:000057">
    <property type="entry name" value="GTPase Der"/>
    <property type="match status" value="1"/>
</dbReference>
<dbReference type="Gene3D" id="3.30.300.20">
    <property type="match status" value="1"/>
</dbReference>
<dbReference type="Gene3D" id="3.40.50.300">
    <property type="entry name" value="P-loop containing nucleotide triphosphate hydrolases"/>
    <property type="match status" value="2"/>
</dbReference>
<dbReference type="HAMAP" id="MF_00195">
    <property type="entry name" value="GTPase_Der"/>
    <property type="match status" value="1"/>
</dbReference>
<dbReference type="InterPro" id="IPR003593">
    <property type="entry name" value="AAA+_ATPase"/>
</dbReference>
<dbReference type="InterPro" id="IPR031166">
    <property type="entry name" value="G_ENGA"/>
</dbReference>
<dbReference type="InterPro" id="IPR006073">
    <property type="entry name" value="GTP-bd"/>
</dbReference>
<dbReference type="InterPro" id="IPR016484">
    <property type="entry name" value="GTPase_Der"/>
</dbReference>
<dbReference type="InterPro" id="IPR032859">
    <property type="entry name" value="KH_dom-like"/>
</dbReference>
<dbReference type="InterPro" id="IPR015946">
    <property type="entry name" value="KH_dom-like_a/b"/>
</dbReference>
<dbReference type="InterPro" id="IPR027417">
    <property type="entry name" value="P-loop_NTPase"/>
</dbReference>
<dbReference type="InterPro" id="IPR005225">
    <property type="entry name" value="Small_GTP-bd"/>
</dbReference>
<dbReference type="NCBIfam" id="TIGR03594">
    <property type="entry name" value="GTPase_EngA"/>
    <property type="match status" value="1"/>
</dbReference>
<dbReference type="NCBIfam" id="TIGR00231">
    <property type="entry name" value="small_GTP"/>
    <property type="match status" value="2"/>
</dbReference>
<dbReference type="PANTHER" id="PTHR43834">
    <property type="entry name" value="GTPASE DER"/>
    <property type="match status" value="1"/>
</dbReference>
<dbReference type="PANTHER" id="PTHR43834:SF6">
    <property type="entry name" value="GTPASE DER"/>
    <property type="match status" value="1"/>
</dbReference>
<dbReference type="Pfam" id="PF14714">
    <property type="entry name" value="KH_dom-like"/>
    <property type="match status" value="1"/>
</dbReference>
<dbReference type="Pfam" id="PF01926">
    <property type="entry name" value="MMR_HSR1"/>
    <property type="match status" value="2"/>
</dbReference>
<dbReference type="PIRSF" id="PIRSF006485">
    <property type="entry name" value="GTP-binding_EngA"/>
    <property type="match status" value="1"/>
</dbReference>
<dbReference type="PRINTS" id="PR00326">
    <property type="entry name" value="GTP1OBG"/>
</dbReference>
<dbReference type="SMART" id="SM00382">
    <property type="entry name" value="AAA"/>
    <property type="match status" value="2"/>
</dbReference>
<dbReference type="SUPFAM" id="SSF52540">
    <property type="entry name" value="P-loop containing nucleoside triphosphate hydrolases"/>
    <property type="match status" value="2"/>
</dbReference>
<dbReference type="PROSITE" id="PS51712">
    <property type="entry name" value="G_ENGA"/>
    <property type="match status" value="2"/>
</dbReference>
<accession>Q46H20</accession>
<keyword id="KW-0342">GTP-binding</keyword>
<keyword id="KW-0547">Nucleotide-binding</keyword>
<keyword id="KW-1185">Reference proteome</keyword>
<keyword id="KW-0677">Repeat</keyword>
<keyword id="KW-0690">Ribosome biogenesis</keyword>
<evidence type="ECO:0000255" key="1">
    <source>
        <dbReference type="HAMAP-Rule" id="MF_00195"/>
    </source>
</evidence>